<protein>
    <recommendedName>
        <fullName evidence="1">S-adenosylmethionine synthase</fullName>
        <shortName evidence="1">AdoMet synthase</shortName>
        <ecNumber evidence="1">2.5.1.6</ecNumber>
    </recommendedName>
    <alternativeName>
        <fullName evidence="1">MAT</fullName>
    </alternativeName>
    <alternativeName>
        <fullName evidence="1">Methionine adenosyltransferase</fullName>
    </alternativeName>
</protein>
<keyword id="KW-0067">ATP-binding</keyword>
<keyword id="KW-0963">Cytoplasm</keyword>
<keyword id="KW-0460">Magnesium</keyword>
<keyword id="KW-0479">Metal-binding</keyword>
<keyword id="KW-0547">Nucleotide-binding</keyword>
<keyword id="KW-0554">One-carbon metabolism</keyword>
<keyword id="KW-0630">Potassium</keyword>
<keyword id="KW-1185">Reference proteome</keyword>
<keyword id="KW-0808">Transferase</keyword>
<feature type="chain" id="PRO_1000093076" description="S-adenosylmethionine synthase">
    <location>
        <begin position="1"/>
        <end position="387"/>
    </location>
</feature>
<feature type="region of interest" description="Flexible loop" evidence="1">
    <location>
        <begin position="101"/>
        <end position="111"/>
    </location>
</feature>
<feature type="binding site" description="in other chain" evidence="1">
    <location>
        <position position="17"/>
    </location>
    <ligand>
        <name>ATP</name>
        <dbReference type="ChEBI" id="CHEBI:30616"/>
        <note>ligand shared between two neighboring subunits</note>
    </ligand>
</feature>
<feature type="binding site" evidence="1">
    <location>
        <position position="19"/>
    </location>
    <ligand>
        <name>Mg(2+)</name>
        <dbReference type="ChEBI" id="CHEBI:18420"/>
    </ligand>
</feature>
<feature type="binding site" evidence="1">
    <location>
        <position position="45"/>
    </location>
    <ligand>
        <name>K(+)</name>
        <dbReference type="ChEBI" id="CHEBI:29103"/>
    </ligand>
</feature>
<feature type="binding site" description="in other chain" evidence="1">
    <location>
        <position position="58"/>
    </location>
    <ligand>
        <name>L-methionine</name>
        <dbReference type="ChEBI" id="CHEBI:57844"/>
        <note>ligand shared between two neighboring subunits</note>
    </ligand>
</feature>
<feature type="binding site" description="in other chain" evidence="1">
    <location>
        <position position="101"/>
    </location>
    <ligand>
        <name>L-methionine</name>
        <dbReference type="ChEBI" id="CHEBI:57844"/>
        <note>ligand shared between two neighboring subunits</note>
    </ligand>
</feature>
<feature type="binding site" description="in other chain" evidence="1">
    <location>
        <begin position="166"/>
        <end position="168"/>
    </location>
    <ligand>
        <name>ATP</name>
        <dbReference type="ChEBI" id="CHEBI:30616"/>
        <note>ligand shared between two neighboring subunits</note>
    </ligand>
</feature>
<feature type="binding site" description="in other chain" evidence="1">
    <location>
        <begin position="231"/>
        <end position="232"/>
    </location>
    <ligand>
        <name>ATP</name>
        <dbReference type="ChEBI" id="CHEBI:30616"/>
        <note>ligand shared between two neighboring subunits</note>
    </ligand>
</feature>
<feature type="binding site" evidence="1">
    <location>
        <position position="240"/>
    </location>
    <ligand>
        <name>ATP</name>
        <dbReference type="ChEBI" id="CHEBI:30616"/>
        <note>ligand shared between two neighboring subunits</note>
    </ligand>
</feature>
<feature type="binding site" evidence="1">
    <location>
        <position position="240"/>
    </location>
    <ligand>
        <name>L-methionine</name>
        <dbReference type="ChEBI" id="CHEBI:57844"/>
        <note>ligand shared between two neighboring subunits</note>
    </ligand>
</feature>
<feature type="binding site" description="in other chain" evidence="1">
    <location>
        <begin position="246"/>
        <end position="247"/>
    </location>
    <ligand>
        <name>ATP</name>
        <dbReference type="ChEBI" id="CHEBI:30616"/>
        <note>ligand shared between two neighboring subunits</note>
    </ligand>
</feature>
<feature type="binding site" evidence="1">
    <location>
        <position position="263"/>
    </location>
    <ligand>
        <name>ATP</name>
        <dbReference type="ChEBI" id="CHEBI:30616"/>
        <note>ligand shared between two neighboring subunits</note>
    </ligand>
</feature>
<feature type="binding site" evidence="1">
    <location>
        <position position="267"/>
    </location>
    <ligand>
        <name>ATP</name>
        <dbReference type="ChEBI" id="CHEBI:30616"/>
        <note>ligand shared between two neighboring subunits</note>
    </ligand>
</feature>
<feature type="binding site" description="in other chain" evidence="1">
    <location>
        <position position="271"/>
    </location>
    <ligand>
        <name>L-methionine</name>
        <dbReference type="ChEBI" id="CHEBI:57844"/>
        <note>ligand shared between two neighboring subunits</note>
    </ligand>
</feature>
<organism>
    <name type="scientific">Rhodospirillum centenum (strain ATCC 51521 / SW)</name>
    <dbReference type="NCBI Taxonomy" id="414684"/>
    <lineage>
        <taxon>Bacteria</taxon>
        <taxon>Pseudomonadati</taxon>
        <taxon>Pseudomonadota</taxon>
        <taxon>Alphaproteobacteria</taxon>
        <taxon>Rhodospirillales</taxon>
        <taxon>Rhodospirillaceae</taxon>
        <taxon>Rhodospirillum</taxon>
    </lineage>
</organism>
<sequence>MAKSNYVFTSESVAEGHPDKVCDRISDAVVDLFLTHDPYARVACETLATTNRVVIAGEVRGPKAALDQVETVARHAVKDIGYEQDGFHWEKFEFTCHLHQQSADIAMGVDAGTDKDEGAGDQGIMFGYACDETPALMPAPLFYSHSILKSLSEARHSGALSWLGPDAKSQVSLQYVDGRPVRATSVVVSTQHSESVPQEEIREAVRRHVLDVLPDGWMCPEDTFYVNPTGRFVIGGPDGDAGLTGRKIIVDTYGGAAPHGGGAFSGKDPTKVDRSAAYAARYLAKNVVAAGLARKCTIQLSYAIGVSYPLSVYIDTAGTGQVDEDKLSDVLRQLMNLSPRGIREHLKLNRPIYARTAAYGHFGREPDADGGFSWEKTDLVDALRRAF</sequence>
<dbReference type="EC" id="2.5.1.6" evidence="1"/>
<dbReference type="EMBL" id="CP000613">
    <property type="protein sequence ID" value="ACJ00340.1"/>
    <property type="molecule type" value="Genomic_DNA"/>
</dbReference>
<dbReference type="RefSeq" id="WP_012568120.1">
    <property type="nucleotide sequence ID" value="NC_011420.2"/>
</dbReference>
<dbReference type="SMR" id="B6IVL6"/>
<dbReference type="STRING" id="414684.RC1_2972"/>
<dbReference type="KEGG" id="rce:RC1_2972"/>
<dbReference type="eggNOG" id="COG0192">
    <property type="taxonomic scope" value="Bacteria"/>
</dbReference>
<dbReference type="HOGENOM" id="CLU_041802_1_1_5"/>
<dbReference type="OrthoDB" id="9801686at2"/>
<dbReference type="UniPathway" id="UPA00315">
    <property type="reaction ID" value="UER00080"/>
</dbReference>
<dbReference type="Proteomes" id="UP000001591">
    <property type="component" value="Chromosome"/>
</dbReference>
<dbReference type="GO" id="GO:0005737">
    <property type="term" value="C:cytoplasm"/>
    <property type="evidence" value="ECO:0007669"/>
    <property type="project" value="UniProtKB-SubCell"/>
</dbReference>
<dbReference type="GO" id="GO:0005524">
    <property type="term" value="F:ATP binding"/>
    <property type="evidence" value="ECO:0007669"/>
    <property type="project" value="UniProtKB-UniRule"/>
</dbReference>
<dbReference type="GO" id="GO:0000287">
    <property type="term" value="F:magnesium ion binding"/>
    <property type="evidence" value="ECO:0007669"/>
    <property type="project" value="UniProtKB-UniRule"/>
</dbReference>
<dbReference type="GO" id="GO:0004478">
    <property type="term" value="F:methionine adenosyltransferase activity"/>
    <property type="evidence" value="ECO:0007669"/>
    <property type="project" value="UniProtKB-UniRule"/>
</dbReference>
<dbReference type="GO" id="GO:0006730">
    <property type="term" value="P:one-carbon metabolic process"/>
    <property type="evidence" value="ECO:0007669"/>
    <property type="project" value="UniProtKB-KW"/>
</dbReference>
<dbReference type="GO" id="GO:0006556">
    <property type="term" value="P:S-adenosylmethionine biosynthetic process"/>
    <property type="evidence" value="ECO:0007669"/>
    <property type="project" value="UniProtKB-UniRule"/>
</dbReference>
<dbReference type="CDD" id="cd18079">
    <property type="entry name" value="S-AdoMet_synt"/>
    <property type="match status" value="1"/>
</dbReference>
<dbReference type="FunFam" id="3.30.300.10:FF:000003">
    <property type="entry name" value="S-adenosylmethionine synthase"/>
    <property type="match status" value="1"/>
</dbReference>
<dbReference type="Gene3D" id="3.30.300.10">
    <property type="match status" value="3"/>
</dbReference>
<dbReference type="HAMAP" id="MF_00086">
    <property type="entry name" value="S_AdoMet_synth1"/>
    <property type="match status" value="1"/>
</dbReference>
<dbReference type="InterPro" id="IPR022631">
    <property type="entry name" value="ADOMET_SYNTHASE_CS"/>
</dbReference>
<dbReference type="InterPro" id="IPR022630">
    <property type="entry name" value="S-AdoMet_synt_C"/>
</dbReference>
<dbReference type="InterPro" id="IPR022629">
    <property type="entry name" value="S-AdoMet_synt_central"/>
</dbReference>
<dbReference type="InterPro" id="IPR022628">
    <property type="entry name" value="S-AdoMet_synt_N"/>
</dbReference>
<dbReference type="InterPro" id="IPR002133">
    <property type="entry name" value="S-AdoMet_synthetase"/>
</dbReference>
<dbReference type="InterPro" id="IPR022636">
    <property type="entry name" value="S-AdoMet_synthetase_sfam"/>
</dbReference>
<dbReference type="NCBIfam" id="TIGR01034">
    <property type="entry name" value="metK"/>
    <property type="match status" value="1"/>
</dbReference>
<dbReference type="PANTHER" id="PTHR11964">
    <property type="entry name" value="S-ADENOSYLMETHIONINE SYNTHETASE"/>
    <property type="match status" value="1"/>
</dbReference>
<dbReference type="Pfam" id="PF02773">
    <property type="entry name" value="S-AdoMet_synt_C"/>
    <property type="match status" value="1"/>
</dbReference>
<dbReference type="Pfam" id="PF02772">
    <property type="entry name" value="S-AdoMet_synt_M"/>
    <property type="match status" value="1"/>
</dbReference>
<dbReference type="Pfam" id="PF00438">
    <property type="entry name" value="S-AdoMet_synt_N"/>
    <property type="match status" value="1"/>
</dbReference>
<dbReference type="PIRSF" id="PIRSF000497">
    <property type="entry name" value="MAT"/>
    <property type="match status" value="1"/>
</dbReference>
<dbReference type="SUPFAM" id="SSF55973">
    <property type="entry name" value="S-adenosylmethionine synthetase"/>
    <property type="match status" value="3"/>
</dbReference>
<dbReference type="PROSITE" id="PS00376">
    <property type="entry name" value="ADOMET_SYNTHASE_1"/>
    <property type="match status" value="1"/>
</dbReference>
<dbReference type="PROSITE" id="PS00377">
    <property type="entry name" value="ADOMET_SYNTHASE_2"/>
    <property type="match status" value="1"/>
</dbReference>
<comment type="function">
    <text evidence="1">Catalyzes the formation of S-adenosylmethionine (AdoMet) from methionine and ATP. The overall synthetic reaction is composed of two sequential steps, AdoMet formation and the subsequent tripolyphosphate hydrolysis which occurs prior to release of AdoMet from the enzyme.</text>
</comment>
<comment type="catalytic activity">
    <reaction evidence="1">
        <text>L-methionine + ATP + H2O = S-adenosyl-L-methionine + phosphate + diphosphate</text>
        <dbReference type="Rhea" id="RHEA:21080"/>
        <dbReference type="ChEBI" id="CHEBI:15377"/>
        <dbReference type="ChEBI" id="CHEBI:30616"/>
        <dbReference type="ChEBI" id="CHEBI:33019"/>
        <dbReference type="ChEBI" id="CHEBI:43474"/>
        <dbReference type="ChEBI" id="CHEBI:57844"/>
        <dbReference type="ChEBI" id="CHEBI:59789"/>
        <dbReference type="EC" id="2.5.1.6"/>
    </reaction>
</comment>
<comment type="cofactor">
    <cofactor evidence="1">
        <name>Mg(2+)</name>
        <dbReference type="ChEBI" id="CHEBI:18420"/>
    </cofactor>
    <text evidence="1">Binds 2 divalent ions per subunit.</text>
</comment>
<comment type="cofactor">
    <cofactor evidence="1">
        <name>K(+)</name>
        <dbReference type="ChEBI" id="CHEBI:29103"/>
    </cofactor>
    <text evidence="1">Binds 1 potassium ion per subunit.</text>
</comment>
<comment type="pathway">
    <text evidence="1">Amino-acid biosynthesis; S-adenosyl-L-methionine biosynthesis; S-adenosyl-L-methionine from L-methionine: step 1/1.</text>
</comment>
<comment type="subunit">
    <text evidence="1">Homotetramer; dimer of dimers.</text>
</comment>
<comment type="subcellular location">
    <subcellularLocation>
        <location evidence="1">Cytoplasm</location>
    </subcellularLocation>
</comment>
<comment type="similarity">
    <text evidence="1">Belongs to the AdoMet synthase family.</text>
</comment>
<proteinExistence type="inferred from homology"/>
<reference key="1">
    <citation type="submission" date="2007-03" db="EMBL/GenBank/DDBJ databases">
        <title>Genome sequence of Rhodospirillum centenum.</title>
        <authorList>
            <person name="Touchman J.W."/>
            <person name="Bauer C."/>
            <person name="Blankenship R.E."/>
        </authorList>
    </citation>
    <scope>NUCLEOTIDE SEQUENCE [LARGE SCALE GENOMIC DNA]</scope>
    <source>
        <strain>ATCC 51521 / SW</strain>
    </source>
</reference>
<accession>B6IVL6</accession>
<gene>
    <name evidence="1" type="primary">metK</name>
    <name type="ordered locus">RC1_2972</name>
</gene>
<evidence type="ECO:0000255" key="1">
    <source>
        <dbReference type="HAMAP-Rule" id="MF_00086"/>
    </source>
</evidence>
<name>METK_RHOCS</name>